<feature type="chain" id="PRO_0000112916" description="Ornithine carbamoyltransferase">
    <location>
        <begin position="1"/>
        <end position="303"/>
    </location>
</feature>
<feature type="binding site" evidence="2">
    <location>
        <begin position="52"/>
        <end position="55"/>
    </location>
    <ligand>
        <name>carbamoyl phosphate</name>
        <dbReference type="ChEBI" id="CHEBI:58228"/>
    </ligand>
</feature>
<feature type="binding site" evidence="2">
    <location>
        <position position="79"/>
    </location>
    <ligand>
        <name>carbamoyl phosphate</name>
        <dbReference type="ChEBI" id="CHEBI:58228"/>
    </ligand>
</feature>
<feature type="binding site" evidence="2">
    <location>
        <position position="103"/>
    </location>
    <ligand>
        <name>carbamoyl phosphate</name>
        <dbReference type="ChEBI" id="CHEBI:58228"/>
    </ligand>
</feature>
<feature type="binding site" evidence="2">
    <location>
        <begin position="130"/>
        <end position="133"/>
    </location>
    <ligand>
        <name>carbamoyl phosphate</name>
        <dbReference type="ChEBI" id="CHEBI:58228"/>
    </ligand>
</feature>
<feature type="binding site" evidence="2">
    <location>
        <position position="161"/>
    </location>
    <ligand>
        <name>L-ornithine</name>
        <dbReference type="ChEBI" id="CHEBI:46911"/>
    </ligand>
</feature>
<feature type="binding site" evidence="2">
    <location>
        <position position="222"/>
    </location>
    <ligand>
        <name>L-ornithine</name>
        <dbReference type="ChEBI" id="CHEBI:46911"/>
    </ligand>
</feature>
<feature type="binding site" evidence="2">
    <location>
        <begin position="226"/>
        <end position="227"/>
    </location>
    <ligand>
        <name>L-ornithine</name>
        <dbReference type="ChEBI" id="CHEBI:46911"/>
    </ligand>
</feature>
<feature type="binding site" evidence="2">
    <location>
        <begin position="262"/>
        <end position="263"/>
    </location>
    <ligand>
        <name>carbamoyl phosphate</name>
        <dbReference type="ChEBI" id="CHEBI:58228"/>
    </ligand>
</feature>
<feature type="binding site" evidence="2">
    <location>
        <position position="290"/>
    </location>
    <ligand>
        <name>carbamoyl phosphate</name>
        <dbReference type="ChEBI" id="CHEBI:58228"/>
    </ligand>
</feature>
<name>OTC_DESPS</name>
<evidence type="ECO:0000250" key="1"/>
<evidence type="ECO:0000255" key="2">
    <source>
        <dbReference type="HAMAP-Rule" id="MF_01109"/>
    </source>
</evidence>
<organism>
    <name type="scientific">Desulfotalea psychrophila (strain LSv54 / DSM 12343)</name>
    <dbReference type="NCBI Taxonomy" id="177439"/>
    <lineage>
        <taxon>Bacteria</taxon>
        <taxon>Pseudomonadati</taxon>
        <taxon>Thermodesulfobacteriota</taxon>
        <taxon>Desulfobulbia</taxon>
        <taxon>Desulfobulbales</taxon>
        <taxon>Desulfocapsaceae</taxon>
        <taxon>Desulfotalea</taxon>
    </lineage>
</organism>
<accession>Q6AR58</accession>
<protein>
    <recommendedName>
        <fullName evidence="2">Ornithine carbamoyltransferase</fullName>
        <shortName evidence="2">OTCase</shortName>
        <ecNumber evidence="2">2.1.3.3</ecNumber>
    </recommendedName>
</protein>
<dbReference type="EC" id="2.1.3.3" evidence="2"/>
<dbReference type="EMBL" id="CR522870">
    <property type="protein sequence ID" value="CAG35166.1"/>
    <property type="molecule type" value="Genomic_DNA"/>
</dbReference>
<dbReference type="RefSeq" id="WP_011187682.1">
    <property type="nucleotide sequence ID" value="NC_006138.1"/>
</dbReference>
<dbReference type="SMR" id="Q6AR58"/>
<dbReference type="STRING" id="177439.DP0437"/>
<dbReference type="KEGG" id="dps:DP0437"/>
<dbReference type="eggNOG" id="COG0078">
    <property type="taxonomic scope" value="Bacteria"/>
</dbReference>
<dbReference type="HOGENOM" id="CLU_043846_3_2_7"/>
<dbReference type="OrthoDB" id="9774690at2"/>
<dbReference type="UniPathway" id="UPA00068">
    <property type="reaction ID" value="UER00112"/>
</dbReference>
<dbReference type="Proteomes" id="UP000000602">
    <property type="component" value="Chromosome"/>
</dbReference>
<dbReference type="GO" id="GO:0005737">
    <property type="term" value="C:cytoplasm"/>
    <property type="evidence" value="ECO:0007669"/>
    <property type="project" value="UniProtKB-SubCell"/>
</dbReference>
<dbReference type="GO" id="GO:0016597">
    <property type="term" value="F:amino acid binding"/>
    <property type="evidence" value="ECO:0007669"/>
    <property type="project" value="InterPro"/>
</dbReference>
<dbReference type="GO" id="GO:0004585">
    <property type="term" value="F:ornithine carbamoyltransferase activity"/>
    <property type="evidence" value="ECO:0007669"/>
    <property type="project" value="UniProtKB-UniRule"/>
</dbReference>
<dbReference type="GO" id="GO:0042450">
    <property type="term" value="P:arginine biosynthetic process via ornithine"/>
    <property type="evidence" value="ECO:0007669"/>
    <property type="project" value="TreeGrafter"/>
</dbReference>
<dbReference type="GO" id="GO:0019240">
    <property type="term" value="P:citrulline biosynthetic process"/>
    <property type="evidence" value="ECO:0007669"/>
    <property type="project" value="TreeGrafter"/>
</dbReference>
<dbReference type="GO" id="GO:0006526">
    <property type="term" value="P:L-arginine biosynthetic process"/>
    <property type="evidence" value="ECO:0007669"/>
    <property type="project" value="UniProtKB-UniRule"/>
</dbReference>
<dbReference type="FunFam" id="3.40.50.1370:FF:000008">
    <property type="entry name" value="Ornithine carbamoyltransferase"/>
    <property type="match status" value="1"/>
</dbReference>
<dbReference type="Gene3D" id="3.40.50.1370">
    <property type="entry name" value="Aspartate/ornithine carbamoyltransferase"/>
    <property type="match status" value="2"/>
</dbReference>
<dbReference type="HAMAP" id="MF_01109">
    <property type="entry name" value="OTCase"/>
    <property type="match status" value="1"/>
</dbReference>
<dbReference type="InterPro" id="IPR006132">
    <property type="entry name" value="Asp/Orn_carbamoyltranf_P-bd"/>
</dbReference>
<dbReference type="InterPro" id="IPR006130">
    <property type="entry name" value="Asp/Orn_carbamoylTrfase"/>
</dbReference>
<dbReference type="InterPro" id="IPR036901">
    <property type="entry name" value="Asp/Orn_carbamoylTrfase_sf"/>
</dbReference>
<dbReference type="InterPro" id="IPR006131">
    <property type="entry name" value="Asp_carbamoyltransf_Asp/Orn-bd"/>
</dbReference>
<dbReference type="InterPro" id="IPR002292">
    <property type="entry name" value="Orn/put_carbamltrans"/>
</dbReference>
<dbReference type="InterPro" id="IPR024904">
    <property type="entry name" value="OTCase_ArgI"/>
</dbReference>
<dbReference type="NCBIfam" id="TIGR00658">
    <property type="entry name" value="orni_carb_tr"/>
    <property type="match status" value="1"/>
</dbReference>
<dbReference type="NCBIfam" id="NF001986">
    <property type="entry name" value="PRK00779.1"/>
    <property type="match status" value="1"/>
</dbReference>
<dbReference type="PANTHER" id="PTHR45753">
    <property type="entry name" value="ORNITHINE CARBAMOYLTRANSFERASE, MITOCHONDRIAL"/>
    <property type="match status" value="1"/>
</dbReference>
<dbReference type="PANTHER" id="PTHR45753:SF3">
    <property type="entry name" value="ORNITHINE TRANSCARBAMYLASE, MITOCHONDRIAL"/>
    <property type="match status" value="1"/>
</dbReference>
<dbReference type="Pfam" id="PF00185">
    <property type="entry name" value="OTCace"/>
    <property type="match status" value="1"/>
</dbReference>
<dbReference type="Pfam" id="PF02729">
    <property type="entry name" value="OTCace_N"/>
    <property type="match status" value="1"/>
</dbReference>
<dbReference type="PRINTS" id="PR00100">
    <property type="entry name" value="AOTCASE"/>
</dbReference>
<dbReference type="PRINTS" id="PR00102">
    <property type="entry name" value="OTCASE"/>
</dbReference>
<dbReference type="SUPFAM" id="SSF53671">
    <property type="entry name" value="Aspartate/ornithine carbamoyltransferase"/>
    <property type="match status" value="1"/>
</dbReference>
<dbReference type="PROSITE" id="PS00097">
    <property type="entry name" value="CARBAMOYLTRANSFERASE"/>
    <property type="match status" value="1"/>
</dbReference>
<comment type="function">
    <text evidence="1">Reversibly catalyzes the transfer of the carbamoyl group from carbamoyl phosphate (CP) to the N(epsilon) atom of ornithine (ORN) to produce L-citrulline.</text>
</comment>
<comment type="catalytic activity">
    <reaction evidence="2">
        <text>carbamoyl phosphate + L-ornithine = L-citrulline + phosphate + H(+)</text>
        <dbReference type="Rhea" id="RHEA:19513"/>
        <dbReference type="ChEBI" id="CHEBI:15378"/>
        <dbReference type="ChEBI" id="CHEBI:43474"/>
        <dbReference type="ChEBI" id="CHEBI:46911"/>
        <dbReference type="ChEBI" id="CHEBI:57743"/>
        <dbReference type="ChEBI" id="CHEBI:58228"/>
        <dbReference type="EC" id="2.1.3.3"/>
    </reaction>
</comment>
<comment type="pathway">
    <text evidence="2">Amino-acid biosynthesis; L-arginine biosynthesis; L-arginine from L-ornithine and carbamoyl phosphate: step 1/3.</text>
</comment>
<comment type="subcellular location">
    <subcellularLocation>
        <location evidence="2">Cytoplasm</location>
    </subcellularLocation>
</comment>
<comment type="similarity">
    <text evidence="2">Belongs to the aspartate/ornithine carbamoyltransferase superfamily. OTCase family.</text>
</comment>
<proteinExistence type="inferred from homology"/>
<sequence length="303" mass="33204">MPDHLSSLGDFTGEEIASLIARAIELKEERSRGIRHQQLAGKSVALIFEKPSTRTRVSFESAMYGLGGQVLFLSGRDTQLSRSEPLKDMARVMSRYVDGIVVRTFGQEVVNELAQYATVPVINALTDLHHPCQILSDIMTVIEKKGAIQDLKIVWVGDGNNMANSWIQAAAKLGFELILACPEGYDPDAEILAAAQAEGAKPITLLRDPQTAVLGADVINVDVFASMGQESEQDERLKIFASYQVNAEMMAKAADDAIVLHCLPAHRGEEITEDVLEGPQCVAFDEAENKMHMHKAILERFLG</sequence>
<gene>
    <name evidence="2" type="primary">argF</name>
    <name type="ordered locus">DP0437</name>
</gene>
<reference key="1">
    <citation type="journal article" date="2004" name="Environ. Microbiol.">
        <title>The genome of Desulfotalea psychrophila, a sulfate-reducing bacterium from permanently cold Arctic sediments.</title>
        <authorList>
            <person name="Rabus R."/>
            <person name="Ruepp A."/>
            <person name="Frickey T."/>
            <person name="Rattei T."/>
            <person name="Fartmann B."/>
            <person name="Stark M."/>
            <person name="Bauer M."/>
            <person name="Zibat A."/>
            <person name="Lombardot T."/>
            <person name="Becker I."/>
            <person name="Amann J."/>
            <person name="Gellner K."/>
            <person name="Teeling H."/>
            <person name="Leuschner W.D."/>
            <person name="Gloeckner F.-O."/>
            <person name="Lupas A.N."/>
            <person name="Amann R."/>
            <person name="Klenk H.-P."/>
        </authorList>
    </citation>
    <scope>NUCLEOTIDE SEQUENCE [LARGE SCALE GENOMIC DNA]</scope>
    <source>
        <strain>DSM 12343 / LSv54</strain>
    </source>
</reference>
<keyword id="KW-0028">Amino-acid biosynthesis</keyword>
<keyword id="KW-0055">Arginine biosynthesis</keyword>
<keyword id="KW-0963">Cytoplasm</keyword>
<keyword id="KW-1185">Reference proteome</keyword>
<keyword id="KW-0808">Transferase</keyword>